<protein>
    <recommendedName>
        <fullName>Uncharacterized ORF6 protein</fullName>
    </recommendedName>
</protein>
<reference key="1">
    <citation type="submission" date="2008-03" db="EMBL/GenBank/DDBJ databases">
        <title>Molecular characterization of Lolium latent virus, proposed type member of a new genus in the family Flexiviridae.</title>
        <authorList>
            <person name="Vaira A.M.V."/>
            <person name="Maroon-Lango C.J."/>
            <person name="Hammond J."/>
        </authorList>
    </citation>
    <scope>NUCLEOTIDE SEQUENCE [GENOMIC RNA]</scope>
</reference>
<proteinExistence type="predicted"/>
<accession>B1PS81</accession>
<organism>
    <name type="scientific">Lolium latent virus (isolate Lolium/USA/US1/-)</name>
    <name type="common">LoLV</name>
    <dbReference type="NCBI Taxonomy" id="686945"/>
    <lineage>
        <taxon>Viruses</taxon>
        <taxon>Riboviria</taxon>
        <taxon>Orthornavirae</taxon>
        <taxon>Kitrinoviricota</taxon>
        <taxon>Alsuviricetes</taxon>
        <taxon>Tymovirales</taxon>
        <taxon>Alphaflexiviridae</taxon>
        <taxon>Lolavirus</taxon>
        <taxon>Lolium latent virus</taxon>
    </lineage>
</organism>
<keyword id="KW-1185">Reference proteome</keyword>
<organismHost>
    <name type="scientific">Lolium multiflorum x Lolium perenne</name>
    <dbReference type="NCBI Taxonomy" id="480553"/>
</organismHost>
<sequence>MAPPTREYRCTPNYHSARHQMSSLLGLCKGGVGPQPRPWCEKTMV</sequence>
<name>ORF6_LOLV</name>
<gene>
    <name type="primary">ORF6</name>
</gene>
<feature type="chain" id="PRO_0000401077" description="Uncharacterized ORF6 protein">
    <location>
        <begin position="1"/>
        <end position="45"/>
    </location>
</feature>
<dbReference type="EMBL" id="EU489641">
    <property type="protein sequence ID" value="ACA53379.1"/>
    <property type="molecule type" value="Genomic_RNA"/>
</dbReference>
<dbReference type="RefSeq" id="YP_001718504.1">
    <property type="nucleotide sequence ID" value="NC_010434.1"/>
</dbReference>
<dbReference type="KEGG" id="vg:6000100"/>
<dbReference type="Proteomes" id="UP000008689">
    <property type="component" value="Segment"/>
</dbReference>